<organism>
    <name type="scientific">Influenza A virus (strain A/Chicken/Pennsylvania/1/1983 H5N2)</name>
    <dbReference type="NCBI Taxonomy" id="385586"/>
    <lineage>
        <taxon>Viruses</taxon>
        <taxon>Riboviria</taxon>
        <taxon>Orthornavirae</taxon>
        <taxon>Negarnaviricota</taxon>
        <taxon>Polyploviricotina</taxon>
        <taxon>Insthoviricetes</taxon>
        <taxon>Articulavirales</taxon>
        <taxon>Orthomyxoviridae</taxon>
        <taxon>Alphainfluenzavirus</taxon>
        <taxon>Alphainfluenzavirus influenzae</taxon>
        <taxon>Influenza A virus</taxon>
    </lineage>
</organism>
<dbReference type="EMBL" id="CY015077">
    <property type="protein sequence ID" value="ABI85100.1"/>
    <property type="molecule type" value="Genomic_RNA"/>
</dbReference>
<dbReference type="SMR" id="Q0A2I1"/>
<dbReference type="Proteomes" id="UP000008584">
    <property type="component" value="Genome"/>
</dbReference>
<dbReference type="GO" id="GO:0030430">
    <property type="term" value="C:host cell cytoplasm"/>
    <property type="evidence" value="ECO:0007669"/>
    <property type="project" value="UniProtKB-SubCell"/>
</dbReference>
<dbReference type="GO" id="GO:0042025">
    <property type="term" value="C:host cell nucleus"/>
    <property type="evidence" value="ECO:0007669"/>
    <property type="project" value="UniProtKB-SubCell"/>
</dbReference>
<dbReference type="GO" id="GO:0030291">
    <property type="term" value="F:protein serine/threonine kinase inhibitor activity"/>
    <property type="evidence" value="ECO:0007669"/>
    <property type="project" value="UniProtKB-KW"/>
</dbReference>
<dbReference type="GO" id="GO:0003723">
    <property type="term" value="F:RNA binding"/>
    <property type="evidence" value="ECO:0007669"/>
    <property type="project" value="UniProtKB-KW"/>
</dbReference>
<dbReference type="GO" id="GO:0039540">
    <property type="term" value="P:symbiont-mediated suppression of host cytoplasmic pattern recognition receptor signaling pathway via inhibition of RIG-I activity"/>
    <property type="evidence" value="ECO:0007669"/>
    <property type="project" value="UniProtKB-KW"/>
</dbReference>
<dbReference type="GO" id="GO:0039657">
    <property type="term" value="P:symbiont-mediated suppression of host gene expression"/>
    <property type="evidence" value="ECO:0007669"/>
    <property type="project" value="UniProtKB-KW"/>
</dbReference>
<dbReference type="GO" id="GO:0039524">
    <property type="term" value="P:symbiont-mediated suppression of host mRNA processing"/>
    <property type="evidence" value="ECO:0007669"/>
    <property type="project" value="UniProtKB-KW"/>
</dbReference>
<dbReference type="GO" id="GO:0039580">
    <property type="term" value="P:symbiont-mediated suppression of host PKR/eIFalpha signaling"/>
    <property type="evidence" value="ECO:0007669"/>
    <property type="project" value="UniProtKB-KW"/>
</dbReference>
<dbReference type="GO" id="GO:0039502">
    <property type="term" value="P:symbiont-mediated suppression of host type I interferon-mediated signaling pathway"/>
    <property type="evidence" value="ECO:0007669"/>
    <property type="project" value="UniProtKB-KW"/>
</dbReference>
<dbReference type="FunFam" id="1.10.287.10:FF:000001">
    <property type="entry name" value="Non-structural protein 1"/>
    <property type="match status" value="1"/>
</dbReference>
<dbReference type="Gene3D" id="3.30.420.330">
    <property type="entry name" value="Influenza virus non-structural protein, effector domain"/>
    <property type="match status" value="1"/>
</dbReference>
<dbReference type="Gene3D" id="1.10.287.10">
    <property type="entry name" value="S15/NS1, RNA-binding"/>
    <property type="match status" value="1"/>
</dbReference>
<dbReference type="HAMAP" id="MF_04066">
    <property type="entry name" value="INFV_NS1"/>
    <property type="match status" value="1"/>
</dbReference>
<dbReference type="InterPro" id="IPR004208">
    <property type="entry name" value="NS1"/>
</dbReference>
<dbReference type="InterPro" id="IPR000256">
    <property type="entry name" value="NS1A"/>
</dbReference>
<dbReference type="InterPro" id="IPR038064">
    <property type="entry name" value="NS1A_effect_dom-like_sf"/>
</dbReference>
<dbReference type="InterPro" id="IPR009068">
    <property type="entry name" value="uS15_NS1_RNA-bd_sf"/>
</dbReference>
<dbReference type="Pfam" id="PF00600">
    <property type="entry name" value="Flu_NS1"/>
    <property type="match status" value="1"/>
</dbReference>
<dbReference type="SUPFAM" id="SSF143021">
    <property type="entry name" value="Ns1 effector domain-like"/>
    <property type="match status" value="1"/>
</dbReference>
<dbReference type="SUPFAM" id="SSF47060">
    <property type="entry name" value="S15/NS1 RNA-binding domain"/>
    <property type="match status" value="1"/>
</dbReference>
<keyword id="KW-0025">Alternative splicing</keyword>
<keyword id="KW-1262">Eukaryotic host gene expression shutoff by virus</keyword>
<keyword id="KW-1035">Host cytoplasm</keyword>
<keyword id="KW-1190">Host gene expression shutoff by virus</keyword>
<keyword id="KW-1192">Host mRNA suppression by virus</keyword>
<keyword id="KW-1048">Host nucleus</keyword>
<keyword id="KW-0945">Host-virus interaction</keyword>
<keyword id="KW-1090">Inhibition of host innate immune response by virus</keyword>
<keyword id="KW-1114">Inhibition of host interferon signaling pathway by virus</keyword>
<keyword id="KW-1102">Inhibition of host PKR by virus</keyword>
<keyword id="KW-1103">Inhibition of host pre-mRNA processing by virus</keyword>
<keyword id="KW-1088">Inhibition of host RIG-I by virus</keyword>
<keyword id="KW-1113">Inhibition of host RLR pathway by virus</keyword>
<keyword id="KW-0922">Interferon antiviral system evasion</keyword>
<keyword id="KW-0694">RNA-binding</keyword>
<keyword id="KW-0832">Ubl conjugation</keyword>
<keyword id="KW-0899">Viral immunoevasion</keyword>
<reference key="1">
    <citation type="journal article" date="2006" name="Science">
        <title>Large-scale sequence analysis of avian influenza isolates.</title>
        <authorList>
            <person name="Obenauer J.C."/>
            <person name="Denson J."/>
            <person name="Mehta P.K."/>
            <person name="Su X."/>
            <person name="Mukatira S."/>
            <person name="Finkelstein D.B."/>
            <person name="Xu X."/>
            <person name="Wang J."/>
            <person name="Ma J."/>
            <person name="Fan Y."/>
            <person name="Rakestraw K.M."/>
            <person name="Webster R.G."/>
            <person name="Hoffmann E."/>
            <person name="Krauss S."/>
            <person name="Zheng J."/>
            <person name="Zhang Z."/>
            <person name="Naeve C.W."/>
        </authorList>
    </citation>
    <scope>NUCLEOTIDE SEQUENCE [GENOMIC RNA]</scope>
</reference>
<protein>
    <recommendedName>
        <fullName evidence="1">Non-structural protein 1</fullName>
        <shortName evidence="1">NS1</shortName>
    </recommendedName>
    <alternativeName>
        <fullName evidence="1">NS1A</fullName>
    </alternativeName>
</protein>
<proteinExistence type="inferred from homology"/>
<comment type="function">
    <text evidence="1">Inhibits post-transcriptional processing of cellular pre-mRNA, by binding and inhibiting two cellular proteins that are required for the 3'-end processing of cellular pre-mRNAs: the 30 kDa cleavage and polyadenylation specificity factor/CPSF4 and the poly(A)-binding protein 2/PABPN1. In turn, unprocessed 3' end pre-mRNAs accumulate in the host nucleus and are no longer exported to the cytoplasm. Cellular protein synthesis is thereby shut off very early after virus infection. Viral protein synthesis is not affected by the inhibition of the cellular 3' end processing machinery because the poly(A) tails of viral mRNAs are produced by the viral polymerase through a stuttering mechanism. Prevents the establishment of the cellular antiviral state by inhibiting TRIM25-mediated RIGI ubiquitination, which normally triggers the antiviral transduction signal that leads to the activation of type I IFN genes by transcription factors IRF3 and IRF7. Also binds poly(A) and U6 snRNA. Inhibits the integrated stress response (ISR) in the infected cell by blocking dsRNA binding by EIF2AK2/PKR and further phosphorylation of EIF2S1/EIF-2ALPHA. Stress granule formation is thus inhibited, which allows protein synthesis and viral replication.</text>
</comment>
<comment type="subunit">
    <text evidence="1">Homodimer. Interacts with host TRIM25 (via coiled coil); this interaction specifically inhibits TRIM25 multimerization and TRIM25-mediated RIGI CARD ubiquitination. Interacts with human EIF2AK2/PKR, CPSF4, IVNS1ABP and PABPN1.</text>
</comment>
<comment type="subcellular location">
    <subcellularLocation>
        <location evidence="1">Host nucleus</location>
    </subcellularLocation>
    <subcellularLocation>
        <location evidence="1">Host cytoplasm</location>
    </subcellularLocation>
    <text evidence="1">In uninfected, transfected cells, NS1 is localized in the nucleus. Only in virus infected cells, the nuclear export signal is unveiled, presumably by a viral protein, and a fraction of NS1 is exported in the cytoplasm.</text>
</comment>
<comment type="alternative products">
    <event type="alternative splicing"/>
    <isoform>
        <id>Q0A2I1-1</id>
        <name>NS1</name>
        <sequence type="displayed"/>
    </isoform>
    <isoform>
        <id>Q0A2I2-1</id>
        <name>NEP</name>
        <name>NS2</name>
        <sequence type="external"/>
    </isoform>
</comment>
<comment type="domain">
    <text evidence="1">The dsRNA-binding region is required for suppression of RNA silencing.</text>
</comment>
<comment type="PTM">
    <text evidence="1">Upon interferon induction, ISGylated via host HERC5; this results in the impairment of NS1 interaction with RNA targets due to its inability to form homodimers and to interact with host EIF2AK2/PKR.</text>
</comment>
<comment type="similarity">
    <text evidence="1">Belongs to the influenza A viruses NS1 family.</text>
</comment>
<name>NS1_I83A5</name>
<gene>
    <name evidence="1" type="primary">NS</name>
</gene>
<evidence type="ECO:0000255" key="1">
    <source>
        <dbReference type="HAMAP-Rule" id="MF_04066"/>
    </source>
</evidence>
<organismHost>
    <name type="scientific">Aves</name>
    <dbReference type="NCBI Taxonomy" id="8782"/>
</organismHost>
<sequence>MDSNTVSSFQVDCFLWHVRKRFADQELGDAPFLDRLRRDQKSLRGRGSTLGLDIETATSAGKQIVERILEEESDEALKMTIASVPVSRYLTDMTLEEMSRDWFMLMPKQKVAGSLCIRMDQAIMDKKIILKANFSVIFGRLETLILLRAFTEEGAIVGEISPLPSLPGHTDEDVKNAIGVLIGGLKWNDNTVRVSEALQRFAWKGSNENGRPPLPSK</sequence>
<accession>Q0A2I1</accession>
<feature type="chain" id="PRO_0000324273" description="Non-structural protein 1">
    <location>
        <begin position="1"/>
        <end position="217"/>
    </location>
</feature>
<feature type="region of interest" description="RNA-binding and homodimerization" evidence="1">
    <location>
        <begin position="1"/>
        <end position="73"/>
    </location>
</feature>
<feature type="region of interest" description="CPSF4-binding" evidence="1">
    <location>
        <begin position="180"/>
        <end position="215"/>
    </location>
</feature>
<feature type="short sequence motif" description="Nuclear localization signal" evidence="1">
    <location>
        <begin position="34"/>
        <end position="38"/>
    </location>
</feature>
<feature type="short sequence motif" description="Nuclear export signal" evidence="1">
    <location>
        <begin position="137"/>
        <end position="146"/>
    </location>
</feature>